<proteinExistence type="predicted"/>
<dbReference type="EMBL" id="AY653733">
    <property type="protein sequence ID" value="AAV50773.1"/>
    <property type="molecule type" value="Genomic_DNA"/>
</dbReference>
<dbReference type="SMR" id="Q5UQ73"/>
<dbReference type="KEGG" id="vg:9925140"/>
<dbReference type="OrthoDB" id="9817at10239"/>
<dbReference type="Proteomes" id="UP000001134">
    <property type="component" value="Genome"/>
</dbReference>
<dbReference type="GO" id="GO:0016787">
    <property type="term" value="F:hydrolase activity"/>
    <property type="evidence" value="ECO:0007669"/>
    <property type="project" value="InterPro"/>
</dbReference>
<dbReference type="Gene3D" id="3.60.21.10">
    <property type="match status" value="1"/>
</dbReference>
<dbReference type="InterPro" id="IPR004843">
    <property type="entry name" value="Calcineurin-like_PHP_ApaH"/>
</dbReference>
<dbReference type="InterPro" id="IPR029052">
    <property type="entry name" value="Metallo-depent_PP-like"/>
</dbReference>
<dbReference type="PANTHER" id="PTHR37844:SF1">
    <property type="entry name" value="CALCINEURIN-LIKE PHOSPHOESTERASE DOMAIN-CONTAINING PROTEIN"/>
    <property type="match status" value="1"/>
</dbReference>
<dbReference type="PANTHER" id="PTHR37844">
    <property type="entry name" value="SER/THR PROTEIN PHOSPHATASE SUPERFAMILY (AFU_ORTHOLOGUE AFUA_1G14840)"/>
    <property type="match status" value="1"/>
</dbReference>
<dbReference type="Pfam" id="PF00149">
    <property type="entry name" value="Metallophos"/>
    <property type="match status" value="1"/>
</dbReference>
<dbReference type="SUPFAM" id="SSF56300">
    <property type="entry name" value="Metallo-dependent phosphatases"/>
    <property type="match status" value="1"/>
</dbReference>
<protein>
    <recommendedName>
        <fullName>Uncharacterized protein L509</fullName>
    </recommendedName>
</protein>
<gene>
    <name type="ordered locus">MIMI_L509</name>
</gene>
<sequence length="280" mass="32740">MRILRYVSDLHLEYIDCIDGKSALNSLWDFKKDPNDIYYLALLGDIGNPFDKSIKKFFQKISPIYDKIFYVPGNHEYYNLNKPYRSIDDFNSQLKNMCQEFPNIILMNNEIYELDDISFIGSTLWSNISESKSNHISKSINDYHLIKKIDNNKLTKITIDDTNKWNTESIDYILNQLKNSIKPLIILTHHAPLFSDNILGNYTADPCYINSLNNEAFHNDLSKILNQPIIAWLYGHTHYTSKFIYNGIIIATNQLGYSHERNNFNPYAYIDIDQLLIDNL</sequence>
<feature type="chain" id="PRO_0000253275" description="Uncharacterized protein L509">
    <location>
        <begin position="1"/>
        <end position="280"/>
    </location>
</feature>
<accession>Q5UQ73</accession>
<keyword id="KW-1185">Reference proteome</keyword>
<organismHost>
    <name type="scientific">Acanthamoeba polyphaga</name>
    <name type="common">Amoeba</name>
    <dbReference type="NCBI Taxonomy" id="5757"/>
</organismHost>
<reference key="1">
    <citation type="journal article" date="2004" name="Science">
        <title>The 1.2-megabase genome sequence of Mimivirus.</title>
        <authorList>
            <person name="Raoult D."/>
            <person name="Audic S."/>
            <person name="Robert C."/>
            <person name="Abergel C."/>
            <person name="Renesto P."/>
            <person name="Ogata H."/>
            <person name="La Scola B."/>
            <person name="Susan M."/>
            <person name="Claverie J.-M."/>
        </authorList>
    </citation>
    <scope>NUCLEOTIDE SEQUENCE [LARGE SCALE GENOMIC DNA]</scope>
    <source>
        <strain>Rowbotham-Bradford</strain>
    </source>
</reference>
<organism>
    <name type="scientific">Acanthamoeba polyphaga mimivirus</name>
    <name type="common">APMV</name>
    <dbReference type="NCBI Taxonomy" id="212035"/>
    <lineage>
        <taxon>Viruses</taxon>
        <taxon>Varidnaviria</taxon>
        <taxon>Bamfordvirae</taxon>
        <taxon>Nucleocytoviricota</taxon>
        <taxon>Megaviricetes</taxon>
        <taxon>Imitervirales</taxon>
        <taxon>Mimiviridae</taxon>
        <taxon>Megamimivirinae</taxon>
        <taxon>Mimivirus</taxon>
        <taxon>Mimivirus bradfordmassiliense</taxon>
    </lineage>
</organism>
<name>YL509_MIMIV</name>